<comment type="function">
    <text evidence="1">The RuvA-RuvB-RuvC complex processes Holliday junction (HJ) DNA during genetic recombination and DNA repair, while the RuvA-RuvB complex plays an important role in the rescue of blocked DNA replication forks via replication fork reversal (RFR). RuvA specifically binds to HJ cruciform DNA, conferring on it an open structure. The RuvB hexamer acts as an ATP-dependent pump, pulling dsDNA into and through the RuvAB complex. HJ branch migration allows RuvC to scan DNA until it finds its consensus sequence, where it cleaves and resolves the cruciform DNA.</text>
</comment>
<comment type="subunit">
    <text evidence="1">Homotetramer. Forms an RuvA(8)-RuvB(12)-Holliday junction (HJ) complex. HJ DNA is sandwiched between 2 RuvA tetramers; dsDNA enters through RuvA and exits via RuvB. An RuvB hexamer assembles on each DNA strand where it exits the tetramer. Each RuvB hexamer is contacted by two RuvA subunits (via domain III) on 2 adjacent RuvB subunits; this complex drives branch migration. In the full resolvosome a probable DNA-RuvA(4)-RuvB(12)-RuvC(2) complex forms which resolves the HJ.</text>
</comment>
<comment type="subcellular location">
    <subcellularLocation>
        <location evidence="1">Cytoplasm</location>
    </subcellularLocation>
</comment>
<comment type="domain">
    <text evidence="1">Has three domains with a flexible linker between the domains II and III and assumes an 'L' shape. Domain III is highly mobile and contacts RuvB.</text>
</comment>
<comment type="similarity">
    <text evidence="1">Belongs to the RuvA family.</text>
</comment>
<accession>Q9L290</accession>
<feature type="chain" id="PRO_0000094689" description="Holliday junction branch migration complex subunit RuvA">
    <location>
        <begin position="1"/>
        <end position="201"/>
    </location>
</feature>
<feature type="region of interest" description="Domain I" evidence="1">
    <location>
        <begin position="1"/>
        <end position="63"/>
    </location>
</feature>
<feature type="region of interest" description="Domain II" evidence="1">
    <location>
        <begin position="64"/>
        <end position="139"/>
    </location>
</feature>
<feature type="region of interest" description="Flexible linker" evidence="1">
    <location>
        <begin position="139"/>
        <end position="143"/>
    </location>
</feature>
<feature type="region of interest" description="Domain III" evidence="1">
    <location>
        <begin position="144"/>
        <end position="201"/>
    </location>
</feature>
<protein>
    <recommendedName>
        <fullName evidence="1">Holliday junction branch migration complex subunit RuvA</fullName>
    </recommendedName>
</protein>
<name>RUVA_STRCO</name>
<sequence length="201" mass="20551">MIAFVSGTVAALAPDAAVIEVGGVGMAVQCTPNTLSTLRLGKPAKLATSLVVREDSLTLYGFADDDERQVFELLQTASGVGPRLAQAMLAVHQPDALRRAVATGDEKALTAVPGIGKKGAQKLLLELKDRLGEPIGAPAVGAPVSTGWRDQLHAALIGLGYATREADEAVSAVAPQAEAAGGTPQVGALLKAALQTLNRAR</sequence>
<dbReference type="EMBL" id="AL939109">
    <property type="protein sequence ID" value="CAB70921.1"/>
    <property type="molecule type" value="Genomic_DNA"/>
</dbReference>
<dbReference type="RefSeq" id="NP_625798.1">
    <property type="nucleotide sequence ID" value="NC_003888.3"/>
</dbReference>
<dbReference type="RefSeq" id="WP_011027825.1">
    <property type="nucleotide sequence ID" value="NZ_VNID01000021.1"/>
</dbReference>
<dbReference type="SMR" id="Q9L290"/>
<dbReference type="FunCoup" id="Q9L290">
    <property type="interactions" value="54"/>
</dbReference>
<dbReference type="STRING" id="100226.gene:17759105"/>
<dbReference type="PaxDb" id="100226-SCO1519"/>
<dbReference type="KEGG" id="sco:SCO1519"/>
<dbReference type="PATRIC" id="fig|100226.15.peg.1528"/>
<dbReference type="eggNOG" id="COG0632">
    <property type="taxonomic scope" value="Bacteria"/>
</dbReference>
<dbReference type="HOGENOM" id="CLU_087936_2_1_11"/>
<dbReference type="InParanoid" id="Q9L290"/>
<dbReference type="OrthoDB" id="5293449at2"/>
<dbReference type="PhylomeDB" id="Q9L290"/>
<dbReference type="Proteomes" id="UP000001973">
    <property type="component" value="Chromosome"/>
</dbReference>
<dbReference type="GO" id="GO:0005737">
    <property type="term" value="C:cytoplasm"/>
    <property type="evidence" value="ECO:0007669"/>
    <property type="project" value="UniProtKB-SubCell"/>
</dbReference>
<dbReference type="GO" id="GO:0009379">
    <property type="term" value="C:Holliday junction helicase complex"/>
    <property type="evidence" value="ECO:0007669"/>
    <property type="project" value="InterPro"/>
</dbReference>
<dbReference type="GO" id="GO:0048476">
    <property type="term" value="C:Holliday junction resolvase complex"/>
    <property type="evidence" value="ECO:0007669"/>
    <property type="project" value="UniProtKB-UniRule"/>
</dbReference>
<dbReference type="GO" id="GO:0005524">
    <property type="term" value="F:ATP binding"/>
    <property type="evidence" value="ECO:0007669"/>
    <property type="project" value="InterPro"/>
</dbReference>
<dbReference type="GO" id="GO:0000400">
    <property type="term" value="F:four-way junction DNA binding"/>
    <property type="evidence" value="ECO:0007669"/>
    <property type="project" value="UniProtKB-UniRule"/>
</dbReference>
<dbReference type="GO" id="GO:0009378">
    <property type="term" value="F:four-way junction helicase activity"/>
    <property type="evidence" value="ECO:0000318"/>
    <property type="project" value="GO_Central"/>
</dbReference>
<dbReference type="GO" id="GO:0006310">
    <property type="term" value="P:DNA recombination"/>
    <property type="evidence" value="ECO:0007669"/>
    <property type="project" value="UniProtKB-UniRule"/>
</dbReference>
<dbReference type="GO" id="GO:0006281">
    <property type="term" value="P:DNA repair"/>
    <property type="evidence" value="ECO:0007669"/>
    <property type="project" value="UniProtKB-UniRule"/>
</dbReference>
<dbReference type="GO" id="GO:0009432">
    <property type="term" value="P:SOS response"/>
    <property type="evidence" value="ECO:0000318"/>
    <property type="project" value="GO_Central"/>
</dbReference>
<dbReference type="CDD" id="cd14332">
    <property type="entry name" value="UBA_RuvA_C"/>
    <property type="match status" value="1"/>
</dbReference>
<dbReference type="Gene3D" id="1.10.150.20">
    <property type="entry name" value="5' to 3' exonuclease, C-terminal subdomain"/>
    <property type="match status" value="1"/>
</dbReference>
<dbReference type="Gene3D" id="1.10.8.10">
    <property type="entry name" value="DNA helicase RuvA subunit, C-terminal domain"/>
    <property type="match status" value="1"/>
</dbReference>
<dbReference type="Gene3D" id="2.40.50.140">
    <property type="entry name" value="Nucleic acid-binding proteins"/>
    <property type="match status" value="1"/>
</dbReference>
<dbReference type="HAMAP" id="MF_00031">
    <property type="entry name" value="DNA_HJ_migration_RuvA"/>
    <property type="match status" value="1"/>
</dbReference>
<dbReference type="InterPro" id="IPR013849">
    <property type="entry name" value="DNA_helicase_Holl-junc_RuvA_I"/>
</dbReference>
<dbReference type="InterPro" id="IPR003583">
    <property type="entry name" value="Hlx-hairpin-Hlx_DNA-bd_motif"/>
</dbReference>
<dbReference type="InterPro" id="IPR012340">
    <property type="entry name" value="NA-bd_OB-fold"/>
</dbReference>
<dbReference type="InterPro" id="IPR000085">
    <property type="entry name" value="RuvA"/>
</dbReference>
<dbReference type="InterPro" id="IPR010994">
    <property type="entry name" value="RuvA_2-like"/>
</dbReference>
<dbReference type="InterPro" id="IPR011114">
    <property type="entry name" value="RuvA_C"/>
</dbReference>
<dbReference type="InterPro" id="IPR036267">
    <property type="entry name" value="RuvA_C_sf"/>
</dbReference>
<dbReference type="NCBIfam" id="TIGR00084">
    <property type="entry name" value="ruvA"/>
    <property type="match status" value="1"/>
</dbReference>
<dbReference type="Pfam" id="PF14520">
    <property type="entry name" value="HHH_5"/>
    <property type="match status" value="1"/>
</dbReference>
<dbReference type="Pfam" id="PF07499">
    <property type="entry name" value="RuvA_C"/>
    <property type="match status" value="1"/>
</dbReference>
<dbReference type="Pfam" id="PF01330">
    <property type="entry name" value="RuvA_N"/>
    <property type="match status" value="1"/>
</dbReference>
<dbReference type="SMART" id="SM00278">
    <property type="entry name" value="HhH1"/>
    <property type="match status" value="2"/>
</dbReference>
<dbReference type="SUPFAM" id="SSF46929">
    <property type="entry name" value="DNA helicase RuvA subunit, C-terminal domain"/>
    <property type="match status" value="1"/>
</dbReference>
<dbReference type="SUPFAM" id="SSF50249">
    <property type="entry name" value="Nucleic acid-binding proteins"/>
    <property type="match status" value="1"/>
</dbReference>
<dbReference type="SUPFAM" id="SSF47781">
    <property type="entry name" value="RuvA domain 2-like"/>
    <property type="match status" value="1"/>
</dbReference>
<keyword id="KW-0963">Cytoplasm</keyword>
<keyword id="KW-0227">DNA damage</keyword>
<keyword id="KW-0233">DNA recombination</keyword>
<keyword id="KW-0234">DNA repair</keyword>
<keyword id="KW-0238">DNA-binding</keyword>
<keyword id="KW-1185">Reference proteome</keyword>
<proteinExistence type="inferred from homology"/>
<evidence type="ECO:0000255" key="1">
    <source>
        <dbReference type="HAMAP-Rule" id="MF_00031"/>
    </source>
</evidence>
<organism>
    <name type="scientific">Streptomyces coelicolor (strain ATCC BAA-471 / A3(2) / M145)</name>
    <dbReference type="NCBI Taxonomy" id="100226"/>
    <lineage>
        <taxon>Bacteria</taxon>
        <taxon>Bacillati</taxon>
        <taxon>Actinomycetota</taxon>
        <taxon>Actinomycetes</taxon>
        <taxon>Kitasatosporales</taxon>
        <taxon>Streptomycetaceae</taxon>
        <taxon>Streptomyces</taxon>
        <taxon>Streptomyces albidoflavus group</taxon>
    </lineage>
</organism>
<reference key="1">
    <citation type="journal article" date="2002" name="Nature">
        <title>Complete genome sequence of the model actinomycete Streptomyces coelicolor A3(2).</title>
        <authorList>
            <person name="Bentley S.D."/>
            <person name="Chater K.F."/>
            <person name="Cerdeno-Tarraga A.-M."/>
            <person name="Challis G.L."/>
            <person name="Thomson N.R."/>
            <person name="James K.D."/>
            <person name="Harris D.E."/>
            <person name="Quail M.A."/>
            <person name="Kieser H."/>
            <person name="Harper D."/>
            <person name="Bateman A."/>
            <person name="Brown S."/>
            <person name="Chandra G."/>
            <person name="Chen C.W."/>
            <person name="Collins M."/>
            <person name="Cronin A."/>
            <person name="Fraser A."/>
            <person name="Goble A."/>
            <person name="Hidalgo J."/>
            <person name="Hornsby T."/>
            <person name="Howarth S."/>
            <person name="Huang C.-H."/>
            <person name="Kieser T."/>
            <person name="Larke L."/>
            <person name="Murphy L.D."/>
            <person name="Oliver K."/>
            <person name="O'Neil S."/>
            <person name="Rabbinowitsch E."/>
            <person name="Rajandream M.A."/>
            <person name="Rutherford K.M."/>
            <person name="Rutter S."/>
            <person name="Seeger K."/>
            <person name="Saunders D."/>
            <person name="Sharp S."/>
            <person name="Squares R."/>
            <person name="Squares S."/>
            <person name="Taylor K."/>
            <person name="Warren T."/>
            <person name="Wietzorrek A."/>
            <person name="Woodward J.R."/>
            <person name="Barrell B.G."/>
            <person name="Parkhill J."/>
            <person name="Hopwood D.A."/>
        </authorList>
    </citation>
    <scope>NUCLEOTIDE SEQUENCE [LARGE SCALE GENOMIC DNA]</scope>
    <source>
        <strain>ATCC BAA-471 / A3(2) / M145</strain>
    </source>
</reference>
<gene>
    <name evidence="1" type="primary">ruvA</name>
    <name type="ordered locus">SCO1519</name>
    <name type="ORF">SCL2.09c</name>
</gene>